<organism>
    <name type="scientific">Homo sapiens</name>
    <name type="common">Human</name>
    <dbReference type="NCBI Taxonomy" id="9606"/>
    <lineage>
        <taxon>Eukaryota</taxon>
        <taxon>Metazoa</taxon>
        <taxon>Chordata</taxon>
        <taxon>Craniata</taxon>
        <taxon>Vertebrata</taxon>
        <taxon>Euteleostomi</taxon>
        <taxon>Mammalia</taxon>
        <taxon>Eutheria</taxon>
        <taxon>Euarchontoglires</taxon>
        <taxon>Primates</taxon>
        <taxon>Haplorrhini</taxon>
        <taxon>Catarrhini</taxon>
        <taxon>Hominidae</taxon>
        <taxon>Homo</taxon>
    </lineage>
</organism>
<name>MUCEN_HUMAN</name>
<keyword id="KW-0025">Alternative splicing</keyword>
<keyword id="KW-1003">Cell membrane</keyword>
<keyword id="KW-0325">Glycoprotein</keyword>
<keyword id="KW-0472">Membrane</keyword>
<keyword id="KW-0597">Phosphoprotein</keyword>
<keyword id="KW-1267">Proteomics identification</keyword>
<keyword id="KW-1185">Reference proteome</keyword>
<keyword id="KW-0964">Secreted</keyword>
<keyword id="KW-0732">Signal</keyword>
<keyword id="KW-0812">Transmembrane</keyword>
<keyword id="KW-1133">Transmembrane helix</keyword>
<dbReference type="EMBL" id="AB034695">
    <property type="protein sequence ID" value="BAA86228.1"/>
    <property type="molecule type" value="mRNA"/>
</dbReference>
<dbReference type="EMBL" id="AF205940">
    <property type="protein sequence ID" value="AAF76295.1"/>
    <property type="molecule type" value="mRNA"/>
</dbReference>
<dbReference type="EMBL" id="AK291831">
    <property type="protein sequence ID" value="BAF84520.1"/>
    <property type="molecule type" value="mRNA"/>
</dbReference>
<dbReference type="EMBL" id="AK304568">
    <property type="protein sequence ID" value="BAG65359.1"/>
    <property type="molecule type" value="mRNA"/>
</dbReference>
<dbReference type="EMBL" id="AC034150">
    <property type="status" value="NOT_ANNOTATED_CDS"/>
    <property type="molecule type" value="Genomic_DNA"/>
</dbReference>
<dbReference type="EMBL" id="AC097459">
    <property type="status" value="NOT_ANNOTATED_CDS"/>
    <property type="molecule type" value="Genomic_DNA"/>
</dbReference>
<dbReference type="EMBL" id="AC115623">
    <property type="status" value="NOT_ANNOTATED_CDS"/>
    <property type="molecule type" value="Genomic_DNA"/>
</dbReference>
<dbReference type="EMBL" id="AC116174">
    <property type="status" value="NOT_ANNOTATED_CDS"/>
    <property type="molecule type" value="Genomic_DNA"/>
</dbReference>
<dbReference type="EMBL" id="AC138606">
    <property type="status" value="NOT_ANNOTATED_CDS"/>
    <property type="molecule type" value="Genomic_DNA"/>
</dbReference>
<dbReference type="EMBL" id="AP001964">
    <property type="status" value="NOT_ANNOTATED_CDS"/>
    <property type="molecule type" value="Genomic_DNA"/>
</dbReference>
<dbReference type="EMBL" id="CH471057">
    <property type="protein sequence ID" value="EAX06122.1"/>
    <property type="molecule type" value="Genomic_DNA"/>
</dbReference>
<dbReference type="EMBL" id="BC017781">
    <property type="protein sequence ID" value="AAH17781.1"/>
    <property type="molecule type" value="mRNA"/>
</dbReference>
<dbReference type="EMBL" id="AY039241">
    <property type="protein sequence ID" value="AAK68660.1"/>
    <property type="molecule type" value="mRNA"/>
</dbReference>
<dbReference type="CCDS" id="CCDS3655.1">
    <molecule id="Q9ULC0-1"/>
</dbReference>
<dbReference type="CCDS" id="CCDS54782.1">
    <molecule id="Q9ULC0-3"/>
</dbReference>
<dbReference type="RefSeq" id="NP_001153166.1">
    <molecule id="Q9ULC0-3"/>
    <property type="nucleotide sequence ID" value="NM_001159694.2"/>
</dbReference>
<dbReference type="RefSeq" id="NP_057326.2">
    <molecule id="Q9ULC0-1"/>
    <property type="nucleotide sequence ID" value="NM_016242.3"/>
</dbReference>
<dbReference type="RefSeq" id="XP_011530326.1">
    <molecule id="Q9ULC0-1"/>
    <property type="nucleotide sequence ID" value="XM_011532024.4"/>
</dbReference>
<dbReference type="RefSeq" id="XP_054206151.1">
    <molecule id="Q9ULC0-1"/>
    <property type="nucleotide sequence ID" value="XM_054350176.1"/>
</dbReference>
<dbReference type="BioGRID" id="119689">
    <property type="interactions" value="10"/>
</dbReference>
<dbReference type="FunCoup" id="Q9ULC0">
    <property type="interactions" value="10"/>
</dbReference>
<dbReference type="IntAct" id="Q9ULC0">
    <property type="interactions" value="7"/>
</dbReference>
<dbReference type="STRING" id="9606.ENSP00000296420"/>
<dbReference type="GlyCosmos" id="Q9ULC0">
    <property type="glycosylation" value="17 sites, 6 glycans"/>
</dbReference>
<dbReference type="GlyGen" id="Q9ULC0">
    <property type="glycosylation" value="19 sites, 7 O-linked glycans (12 sites)"/>
</dbReference>
<dbReference type="iPTMnet" id="Q9ULC0"/>
<dbReference type="PhosphoSitePlus" id="Q9ULC0"/>
<dbReference type="SwissPalm" id="Q9ULC0"/>
<dbReference type="BioMuta" id="EMCN"/>
<dbReference type="DMDM" id="50400693"/>
<dbReference type="MassIVE" id="Q9ULC0"/>
<dbReference type="PaxDb" id="9606-ENSP00000296420"/>
<dbReference type="PeptideAtlas" id="Q9ULC0"/>
<dbReference type="ProteomicsDB" id="84972">
    <molecule id="Q9ULC0-1"/>
</dbReference>
<dbReference type="ProteomicsDB" id="84973">
    <molecule id="Q9ULC0-2"/>
</dbReference>
<dbReference type="ProteomicsDB" id="84974">
    <molecule id="Q9ULC0-3"/>
</dbReference>
<dbReference type="TopDownProteomics" id="Q9ULC0-2">
    <molecule id="Q9ULC0-2"/>
</dbReference>
<dbReference type="Antibodypedia" id="989">
    <property type="antibodies" value="213 antibodies from 34 providers"/>
</dbReference>
<dbReference type="DNASU" id="51705"/>
<dbReference type="Ensembl" id="ENST00000296420.9">
    <molecule id="Q9ULC0-1"/>
    <property type="protein sequence ID" value="ENSP00000296420.4"/>
    <property type="gene ID" value="ENSG00000164035.10"/>
</dbReference>
<dbReference type="Ensembl" id="ENST00000305864.7">
    <molecule id="Q9ULC0-2"/>
    <property type="protein sequence ID" value="ENSP00000304780.3"/>
    <property type="gene ID" value="ENSG00000164035.10"/>
</dbReference>
<dbReference type="Ensembl" id="ENST00000511970.5">
    <molecule id="Q9ULC0-3"/>
    <property type="protein sequence ID" value="ENSP00000422432.1"/>
    <property type="gene ID" value="ENSG00000164035.10"/>
</dbReference>
<dbReference type="GeneID" id="51705"/>
<dbReference type="KEGG" id="hsa:51705"/>
<dbReference type="MANE-Select" id="ENST00000296420.9">
    <property type="protein sequence ID" value="ENSP00000296420.4"/>
    <property type="RefSeq nucleotide sequence ID" value="NM_016242.4"/>
    <property type="RefSeq protein sequence ID" value="NP_057326.2"/>
</dbReference>
<dbReference type="UCSC" id="uc003hvr.3">
    <molecule id="Q9ULC0-1"/>
    <property type="organism name" value="human"/>
</dbReference>
<dbReference type="AGR" id="HGNC:16041"/>
<dbReference type="CTD" id="51705"/>
<dbReference type="DisGeNET" id="51705"/>
<dbReference type="GeneCards" id="EMCN"/>
<dbReference type="HGNC" id="HGNC:16041">
    <property type="gene designation" value="EMCN"/>
</dbReference>
<dbReference type="HPA" id="ENSG00000164035">
    <property type="expression patterns" value="Low tissue specificity"/>
</dbReference>
<dbReference type="MIM" id="608350">
    <property type="type" value="gene"/>
</dbReference>
<dbReference type="neXtProt" id="NX_Q9ULC0"/>
<dbReference type="OpenTargets" id="ENSG00000164035"/>
<dbReference type="PharmGKB" id="PA144596436"/>
<dbReference type="VEuPathDB" id="HostDB:ENSG00000164035"/>
<dbReference type="eggNOG" id="ENOG502S6VA">
    <property type="taxonomic scope" value="Eukaryota"/>
</dbReference>
<dbReference type="GeneTree" id="ENSGT00390000012139"/>
<dbReference type="HOGENOM" id="CLU_092835_0_0_1"/>
<dbReference type="InParanoid" id="Q9ULC0"/>
<dbReference type="OMA" id="ISQFQGT"/>
<dbReference type="OrthoDB" id="9632909at2759"/>
<dbReference type="PAN-GO" id="Q9ULC0">
    <property type="GO annotations" value="0 GO annotations based on evolutionary models"/>
</dbReference>
<dbReference type="PhylomeDB" id="Q9ULC0"/>
<dbReference type="TreeFam" id="TF337783"/>
<dbReference type="PathwayCommons" id="Q9ULC0"/>
<dbReference type="SignaLink" id="Q9ULC0"/>
<dbReference type="BioGRID-ORCS" id="51705">
    <property type="hits" value="12 hits in 1139 CRISPR screens"/>
</dbReference>
<dbReference type="ChiTaRS" id="EMCN">
    <property type="organism name" value="human"/>
</dbReference>
<dbReference type="GeneWiki" id="EMCN"/>
<dbReference type="GenomeRNAi" id="51705"/>
<dbReference type="Pharos" id="Q9ULC0">
    <property type="development level" value="Tbio"/>
</dbReference>
<dbReference type="PRO" id="PR:Q9ULC0"/>
<dbReference type="Proteomes" id="UP000005640">
    <property type="component" value="Chromosome 4"/>
</dbReference>
<dbReference type="RNAct" id="Q9ULC0">
    <property type="molecule type" value="protein"/>
</dbReference>
<dbReference type="Bgee" id="ENSG00000164035">
    <property type="expression patterns" value="Expressed in calcaneal tendon and 170 other cell types or tissues"/>
</dbReference>
<dbReference type="ExpressionAtlas" id="Q9ULC0">
    <property type="expression patterns" value="baseline and differential"/>
</dbReference>
<dbReference type="GO" id="GO:0005576">
    <property type="term" value="C:extracellular region"/>
    <property type="evidence" value="ECO:0007669"/>
    <property type="project" value="UniProtKB-SubCell"/>
</dbReference>
<dbReference type="GO" id="GO:0005886">
    <property type="term" value="C:plasma membrane"/>
    <property type="evidence" value="ECO:0007669"/>
    <property type="project" value="UniProtKB-SubCell"/>
</dbReference>
<dbReference type="GO" id="GO:0061484">
    <property type="term" value="P:hematopoietic stem cell homeostasis"/>
    <property type="evidence" value="ECO:0007669"/>
    <property type="project" value="Ensembl"/>
</dbReference>
<dbReference type="InterPro" id="IPR010740">
    <property type="entry name" value="Endomucin"/>
</dbReference>
<dbReference type="PANTHER" id="PTHR15869:SF0">
    <property type="entry name" value="ENDOMUCIN"/>
    <property type="match status" value="1"/>
</dbReference>
<dbReference type="PANTHER" id="PTHR15869">
    <property type="entry name" value="ENDOMUCIN-RELATED"/>
    <property type="match status" value="1"/>
</dbReference>
<dbReference type="Pfam" id="PF07010">
    <property type="entry name" value="Endomucin"/>
    <property type="match status" value="1"/>
</dbReference>
<feature type="signal peptide" evidence="2">
    <location>
        <begin position="1"/>
        <end position="18"/>
    </location>
</feature>
<feature type="chain" id="PRO_0000019290" description="Endomucin">
    <location>
        <begin position="19"/>
        <end position="261"/>
    </location>
</feature>
<feature type="topological domain" description="Extracellular" evidence="2">
    <location>
        <begin position="19"/>
        <end position="190"/>
    </location>
</feature>
<feature type="transmembrane region" description="Helical" evidence="2">
    <location>
        <begin position="191"/>
        <end position="211"/>
    </location>
</feature>
<feature type="topological domain" description="Cytoplasmic" evidence="2">
    <location>
        <begin position="212"/>
        <end position="261"/>
    </location>
</feature>
<feature type="region of interest" description="Disordered" evidence="3">
    <location>
        <begin position="118"/>
        <end position="183"/>
    </location>
</feature>
<feature type="compositionally biased region" description="Polar residues" evidence="3">
    <location>
        <begin position="118"/>
        <end position="134"/>
    </location>
</feature>
<feature type="compositionally biased region" description="Polar residues" evidence="3">
    <location>
        <begin position="146"/>
        <end position="171"/>
    </location>
</feature>
<feature type="modified residue" description="Phosphoserine" evidence="1">
    <location>
        <position position="237"/>
    </location>
</feature>
<feature type="glycosylation site" description="N-linked (GlcNAc...) asparagine" evidence="2">
    <location>
        <position position="19"/>
    </location>
</feature>
<feature type="glycosylation site" description="N-linked (GlcNAc...) asparagine" evidence="2">
    <location>
        <position position="28"/>
    </location>
</feature>
<feature type="glycosylation site" description="N-linked (GlcNAc...) asparagine" evidence="2">
    <location>
        <position position="98"/>
    </location>
</feature>
<feature type="glycosylation site" description="N-linked (GlcNAc...) asparagine" evidence="2">
    <location>
        <position position="104"/>
    </location>
</feature>
<feature type="glycosylation site" description="N-linked (GlcNAc...) asparagine" evidence="2">
    <location>
        <position position="164"/>
    </location>
</feature>
<feature type="glycosylation site" description="N-linked (GlcNAc...) asparagine" evidence="2">
    <location>
        <position position="178"/>
    </location>
</feature>
<feature type="splice variant" id="VSP_043264" description="In isoform 3." evidence="6">
    <original>TETQSSIKTTEIPG</original>
    <variation>S</variation>
    <location>
        <begin position="126"/>
        <end position="139"/>
    </location>
</feature>
<feature type="splice variant" id="VSP_010826" description="In isoform 2." evidence="6 7">
    <location>
        <begin position="140"/>
        <end position="222"/>
    </location>
</feature>
<feature type="sequence conflict" description="In Ref. 1; BAA86228." evidence="8" ref="1">
    <original>G</original>
    <variation>D</variation>
    <location>
        <position position="172"/>
    </location>
</feature>
<accession>Q9ULC0</accession>
<accession>A8K716</accession>
<accession>B4E347</accession>
<accession>Q8NEY5</accession>
<accession>Q8WWE7</accession>
<accession>Q9NRM8</accession>
<evidence type="ECO:0000250" key="1">
    <source>
        <dbReference type="UniProtKB" id="Q9R0H2"/>
    </source>
</evidence>
<evidence type="ECO:0000255" key="2"/>
<evidence type="ECO:0000256" key="3">
    <source>
        <dbReference type="SAM" id="MobiDB-lite"/>
    </source>
</evidence>
<evidence type="ECO:0000269" key="4">
    <source>
    </source>
</evidence>
<evidence type="ECO:0000269" key="5">
    <source>
    </source>
</evidence>
<evidence type="ECO:0000303" key="6">
    <source>
    </source>
</evidence>
<evidence type="ECO:0000303" key="7">
    <source>
    </source>
</evidence>
<evidence type="ECO:0000305" key="8"/>
<gene>
    <name type="primary">EMCN</name>
    <name type="synonym">EMCN2</name>
    <name type="synonym">MUC14</name>
</gene>
<reference key="1">
    <citation type="journal article" date="2001" name="FEBS Lett.">
        <title>Identification of human endomucin-1 and -2 as membrane-bound O-sialoglycoproteins with anti-adhesive activity.</title>
        <authorList>
            <person name="Kinoshita M."/>
            <person name="Nakamura T."/>
            <person name="Ihara M."/>
            <person name="Haraguchi T."/>
            <person name="Hiraoka Y."/>
            <person name="Tashiro K."/>
            <person name="Noda M."/>
        </authorList>
    </citation>
    <scope>NUCLEOTIDE SEQUENCE [MRNA] (ISOFORM 1)</scope>
    <scope>GLYCOSYLATION</scope>
    <scope>TISSUE SPECIFICITY</scope>
    <source>
        <tissue>Vascular endothelial cell</tissue>
    </source>
</reference>
<reference key="2">
    <citation type="journal article" date="2002" name="J. Invest. Dermatol.">
        <title>Expression of endomucin, a novel endothelial sialomucin, in normal and diseased human skin.</title>
        <authorList>
            <person name="Kuhn A."/>
            <person name="Brachtendorf G."/>
            <person name="Kurth F."/>
            <person name="Sonntag M."/>
            <person name="Samulowitz U."/>
            <person name="Metze D."/>
            <person name="Vestweber D."/>
        </authorList>
    </citation>
    <scope>NUCLEOTIDE SEQUENCE [MRNA] (ISOFORM 1)</scope>
    <scope>TISSUE SPECIFICITY</scope>
    <source>
        <tissue>Umbilical vein endothelial cell</tissue>
    </source>
</reference>
<reference key="3">
    <citation type="journal article" date="2004" name="Nat. Genet.">
        <title>Complete sequencing and characterization of 21,243 full-length human cDNAs.</title>
        <authorList>
            <person name="Ota T."/>
            <person name="Suzuki Y."/>
            <person name="Nishikawa T."/>
            <person name="Otsuki T."/>
            <person name="Sugiyama T."/>
            <person name="Irie R."/>
            <person name="Wakamatsu A."/>
            <person name="Hayashi K."/>
            <person name="Sato H."/>
            <person name="Nagai K."/>
            <person name="Kimura K."/>
            <person name="Makita H."/>
            <person name="Sekine M."/>
            <person name="Obayashi M."/>
            <person name="Nishi T."/>
            <person name="Shibahara T."/>
            <person name="Tanaka T."/>
            <person name="Ishii S."/>
            <person name="Yamamoto J."/>
            <person name="Saito K."/>
            <person name="Kawai Y."/>
            <person name="Isono Y."/>
            <person name="Nakamura Y."/>
            <person name="Nagahari K."/>
            <person name="Murakami K."/>
            <person name="Yasuda T."/>
            <person name="Iwayanagi T."/>
            <person name="Wagatsuma M."/>
            <person name="Shiratori A."/>
            <person name="Sudo H."/>
            <person name="Hosoiri T."/>
            <person name="Kaku Y."/>
            <person name="Kodaira H."/>
            <person name="Kondo H."/>
            <person name="Sugawara M."/>
            <person name="Takahashi M."/>
            <person name="Kanda K."/>
            <person name="Yokoi T."/>
            <person name="Furuya T."/>
            <person name="Kikkawa E."/>
            <person name="Omura Y."/>
            <person name="Abe K."/>
            <person name="Kamihara K."/>
            <person name="Katsuta N."/>
            <person name="Sato K."/>
            <person name="Tanikawa M."/>
            <person name="Yamazaki M."/>
            <person name="Ninomiya K."/>
            <person name="Ishibashi T."/>
            <person name="Yamashita H."/>
            <person name="Murakawa K."/>
            <person name="Fujimori K."/>
            <person name="Tanai H."/>
            <person name="Kimata M."/>
            <person name="Watanabe M."/>
            <person name="Hiraoka S."/>
            <person name="Chiba Y."/>
            <person name="Ishida S."/>
            <person name="Ono Y."/>
            <person name="Takiguchi S."/>
            <person name="Watanabe S."/>
            <person name="Yosida M."/>
            <person name="Hotuta T."/>
            <person name="Kusano J."/>
            <person name="Kanehori K."/>
            <person name="Takahashi-Fujii A."/>
            <person name="Hara H."/>
            <person name="Tanase T.-O."/>
            <person name="Nomura Y."/>
            <person name="Togiya S."/>
            <person name="Komai F."/>
            <person name="Hara R."/>
            <person name="Takeuchi K."/>
            <person name="Arita M."/>
            <person name="Imose N."/>
            <person name="Musashino K."/>
            <person name="Yuuki H."/>
            <person name="Oshima A."/>
            <person name="Sasaki N."/>
            <person name="Aotsuka S."/>
            <person name="Yoshikawa Y."/>
            <person name="Matsunawa H."/>
            <person name="Ichihara T."/>
            <person name="Shiohata N."/>
            <person name="Sano S."/>
            <person name="Moriya S."/>
            <person name="Momiyama H."/>
            <person name="Satoh N."/>
            <person name="Takami S."/>
            <person name="Terashima Y."/>
            <person name="Suzuki O."/>
            <person name="Nakagawa S."/>
            <person name="Senoh A."/>
            <person name="Mizoguchi H."/>
            <person name="Goto Y."/>
            <person name="Shimizu F."/>
            <person name="Wakebe H."/>
            <person name="Hishigaki H."/>
            <person name="Watanabe T."/>
            <person name="Sugiyama A."/>
            <person name="Takemoto M."/>
            <person name="Kawakami B."/>
            <person name="Yamazaki M."/>
            <person name="Watanabe K."/>
            <person name="Kumagai A."/>
            <person name="Itakura S."/>
            <person name="Fukuzumi Y."/>
            <person name="Fujimori Y."/>
            <person name="Komiyama M."/>
            <person name="Tashiro H."/>
            <person name="Tanigami A."/>
            <person name="Fujiwara T."/>
            <person name="Ono T."/>
            <person name="Yamada K."/>
            <person name="Fujii Y."/>
            <person name="Ozaki K."/>
            <person name="Hirao M."/>
            <person name="Ohmori Y."/>
            <person name="Kawabata A."/>
            <person name="Hikiji T."/>
            <person name="Kobatake N."/>
            <person name="Inagaki H."/>
            <person name="Ikema Y."/>
            <person name="Okamoto S."/>
            <person name="Okitani R."/>
            <person name="Kawakami T."/>
            <person name="Noguchi S."/>
            <person name="Itoh T."/>
            <person name="Shigeta K."/>
            <person name="Senba T."/>
            <person name="Matsumura K."/>
            <person name="Nakajima Y."/>
            <person name="Mizuno T."/>
            <person name="Morinaga M."/>
            <person name="Sasaki M."/>
            <person name="Togashi T."/>
            <person name="Oyama M."/>
            <person name="Hata H."/>
            <person name="Watanabe M."/>
            <person name="Komatsu T."/>
            <person name="Mizushima-Sugano J."/>
            <person name="Satoh T."/>
            <person name="Shirai Y."/>
            <person name="Takahashi Y."/>
            <person name="Nakagawa K."/>
            <person name="Okumura K."/>
            <person name="Nagase T."/>
            <person name="Nomura N."/>
            <person name="Kikuchi H."/>
            <person name="Masuho Y."/>
            <person name="Yamashita R."/>
            <person name="Nakai K."/>
            <person name="Yada T."/>
            <person name="Nakamura Y."/>
            <person name="Ohara O."/>
            <person name="Isogai T."/>
            <person name="Sugano S."/>
        </authorList>
    </citation>
    <scope>NUCLEOTIDE SEQUENCE [LARGE SCALE MRNA] (ISOFORMS 2 AND 3)</scope>
    <source>
        <tissue>Uterus</tissue>
    </source>
</reference>
<reference key="4">
    <citation type="journal article" date="2005" name="Nature">
        <title>Generation and annotation of the DNA sequences of human chromosomes 2 and 4.</title>
        <authorList>
            <person name="Hillier L.W."/>
            <person name="Graves T.A."/>
            <person name="Fulton R.S."/>
            <person name="Fulton L.A."/>
            <person name="Pepin K.H."/>
            <person name="Minx P."/>
            <person name="Wagner-McPherson C."/>
            <person name="Layman D."/>
            <person name="Wylie K."/>
            <person name="Sekhon M."/>
            <person name="Becker M.C."/>
            <person name="Fewell G.A."/>
            <person name="Delehaunty K.D."/>
            <person name="Miner T.L."/>
            <person name="Nash W.E."/>
            <person name="Kremitzki C."/>
            <person name="Oddy L."/>
            <person name="Du H."/>
            <person name="Sun H."/>
            <person name="Bradshaw-Cordum H."/>
            <person name="Ali J."/>
            <person name="Carter J."/>
            <person name="Cordes M."/>
            <person name="Harris A."/>
            <person name="Isak A."/>
            <person name="van Brunt A."/>
            <person name="Nguyen C."/>
            <person name="Du F."/>
            <person name="Courtney L."/>
            <person name="Kalicki J."/>
            <person name="Ozersky P."/>
            <person name="Abbott S."/>
            <person name="Armstrong J."/>
            <person name="Belter E.A."/>
            <person name="Caruso L."/>
            <person name="Cedroni M."/>
            <person name="Cotton M."/>
            <person name="Davidson T."/>
            <person name="Desai A."/>
            <person name="Elliott G."/>
            <person name="Erb T."/>
            <person name="Fronick C."/>
            <person name="Gaige T."/>
            <person name="Haakenson W."/>
            <person name="Haglund K."/>
            <person name="Holmes A."/>
            <person name="Harkins R."/>
            <person name="Kim K."/>
            <person name="Kruchowski S.S."/>
            <person name="Strong C.M."/>
            <person name="Grewal N."/>
            <person name="Goyea E."/>
            <person name="Hou S."/>
            <person name="Levy A."/>
            <person name="Martinka S."/>
            <person name="Mead K."/>
            <person name="McLellan M.D."/>
            <person name="Meyer R."/>
            <person name="Randall-Maher J."/>
            <person name="Tomlinson C."/>
            <person name="Dauphin-Kohlberg S."/>
            <person name="Kozlowicz-Reilly A."/>
            <person name="Shah N."/>
            <person name="Swearengen-Shahid S."/>
            <person name="Snider J."/>
            <person name="Strong J.T."/>
            <person name="Thompson J."/>
            <person name="Yoakum M."/>
            <person name="Leonard S."/>
            <person name="Pearman C."/>
            <person name="Trani L."/>
            <person name="Radionenko M."/>
            <person name="Waligorski J.E."/>
            <person name="Wang C."/>
            <person name="Rock S.M."/>
            <person name="Tin-Wollam A.-M."/>
            <person name="Maupin R."/>
            <person name="Latreille P."/>
            <person name="Wendl M.C."/>
            <person name="Yang S.-P."/>
            <person name="Pohl C."/>
            <person name="Wallis J.W."/>
            <person name="Spieth J."/>
            <person name="Bieri T.A."/>
            <person name="Berkowicz N."/>
            <person name="Nelson J.O."/>
            <person name="Osborne J."/>
            <person name="Ding L."/>
            <person name="Meyer R."/>
            <person name="Sabo A."/>
            <person name="Shotland Y."/>
            <person name="Sinha P."/>
            <person name="Wohldmann P.E."/>
            <person name="Cook L.L."/>
            <person name="Hickenbotham M.T."/>
            <person name="Eldred J."/>
            <person name="Williams D."/>
            <person name="Jones T.A."/>
            <person name="She X."/>
            <person name="Ciccarelli F.D."/>
            <person name="Izaurralde E."/>
            <person name="Taylor J."/>
            <person name="Schmutz J."/>
            <person name="Myers R.M."/>
            <person name="Cox D.R."/>
            <person name="Huang X."/>
            <person name="McPherson J.D."/>
            <person name="Mardis E.R."/>
            <person name="Clifton S.W."/>
            <person name="Warren W.C."/>
            <person name="Chinwalla A.T."/>
            <person name="Eddy S.R."/>
            <person name="Marra M.A."/>
            <person name="Ovcharenko I."/>
            <person name="Furey T.S."/>
            <person name="Miller W."/>
            <person name="Eichler E.E."/>
            <person name="Bork P."/>
            <person name="Suyama M."/>
            <person name="Torrents D."/>
            <person name="Waterston R.H."/>
            <person name="Wilson R.K."/>
        </authorList>
    </citation>
    <scope>NUCLEOTIDE SEQUENCE [LARGE SCALE GENOMIC DNA]</scope>
</reference>
<reference key="5">
    <citation type="submission" date="2005-07" db="EMBL/GenBank/DDBJ databases">
        <authorList>
            <person name="Mural R.J."/>
            <person name="Istrail S."/>
            <person name="Sutton G.G."/>
            <person name="Florea L."/>
            <person name="Halpern A.L."/>
            <person name="Mobarry C.M."/>
            <person name="Lippert R."/>
            <person name="Walenz B."/>
            <person name="Shatkay H."/>
            <person name="Dew I."/>
            <person name="Miller J.R."/>
            <person name="Flanigan M.J."/>
            <person name="Edwards N.J."/>
            <person name="Bolanos R."/>
            <person name="Fasulo D."/>
            <person name="Halldorsson B.V."/>
            <person name="Hannenhalli S."/>
            <person name="Turner R."/>
            <person name="Yooseph S."/>
            <person name="Lu F."/>
            <person name="Nusskern D.R."/>
            <person name="Shue B.C."/>
            <person name="Zheng X.H."/>
            <person name="Zhong F."/>
            <person name="Delcher A.L."/>
            <person name="Huson D.H."/>
            <person name="Kravitz S.A."/>
            <person name="Mouchard L."/>
            <person name="Reinert K."/>
            <person name="Remington K.A."/>
            <person name="Clark A.G."/>
            <person name="Waterman M.S."/>
            <person name="Eichler E.E."/>
            <person name="Adams M.D."/>
            <person name="Hunkapiller M.W."/>
            <person name="Myers E.W."/>
            <person name="Venter J.C."/>
        </authorList>
    </citation>
    <scope>NUCLEOTIDE SEQUENCE [LARGE SCALE GENOMIC DNA]</scope>
</reference>
<reference key="6">
    <citation type="journal article" date="2004" name="Genome Res.">
        <title>The status, quality, and expansion of the NIH full-length cDNA project: the Mammalian Gene Collection (MGC).</title>
        <authorList>
            <consortium name="The MGC Project Team"/>
        </authorList>
    </citation>
    <scope>NUCLEOTIDE SEQUENCE [LARGE SCALE MRNA] (ISOFORM 2)</scope>
    <source>
        <tissue>Lung</tissue>
    </source>
</reference>
<reference key="7">
    <citation type="journal article" date="2004" name="Cancer Immunol. Immunother.">
        <title>Identification of tumour antigens by serological analysis of cDNA expression cloning.</title>
        <authorList>
            <person name="Li G."/>
            <person name="Miles A."/>
            <person name="Line A."/>
            <person name="Rees R.C."/>
        </authorList>
    </citation>
    <scope>NUCLEOTIDE SEQUENCE [MRNA] OF 42-261 (ISOFORM 1)</scope>
    <source>
        <tissue>Gastric adenocarcinoma</tissue>
    </source>
</reference>
<comment type="function">
    <text>Endothelial sialomucin, also called endomucin or mucin-like sialoglycoprotein, which interferes with the assembly of focal adhesion complexes and inhibits interaction between cells and the extracellular matrix.</text>
</comment>
<comment type="interaction">
    <interactant intactId="EBI-12164849">
        <id>Q9ULC0-2</id>
    </interactant>
    <interactant intactId="EBI-744081">
        <id>Q96EQ0</id>
        <label>SGTB</label>
    </interactant>
    <organismsDiffer>false</organismsDiffer>
    <experiments>5</experiments>
</comment>
<comment type="subcellular location">
    <molecule>Isoform 1</molecule>
    <subcellularLocation>
        <location>Cell membrane</location>
        <topology>Single-pass type I membrane protein</topology>
    </subcellularLocation>
    <subcellularLocation>
        <location>Membrane</location>
        <topology>Single-pass type I membrane protein</topology>
    </subcellularLocation>
    <text>Consistently localized to the plasma membrane and less abundantly to Golgi-like perinuclear stacks.</text>
</comment>
<comment type="subcellular location">
    <molecule>Isoform 2</molecule>
    <subcellularLocation>
        <location evidence="8">Secreted</location>
    </subcellularLocation>
</comment>
<comment type="alternative products">
    <event type="alternative splicing"/>
    <isoform>
        <id>Q9ULC0-1</id>
        <name>1</name>
        <sequence type="displayed"/>
    </isoform>
    <isoform>
        <id>Q9ULC0-2</id>
        <name>2</name>
        <sequence type="described" ref="VSP_010826"/>
    </isoform>
    <isoform>
        <id>Q9ULC0-3</id>
        <name>3</name>
        <sequence type="described" ref="VSP_043264"/>
    </isoform>
</comment>
<comment type="tissue specificity">
    <text evidence="4 5">Expressed in heart, kidney and lung.</text>
</comment>
<comment type="PTM">
    <text evidence="4">Highly O-glycosylated. Sialic acid-rich glycoprotein.</text>
</comment>
<proteinExistence type="evidence at protein level"/>
<protein>
    <recommendedName>
        <fullName>Endomucin</fullName>
    </recommendedName>
    <alternativeName>
        <fullName>Endomucin-2</fullName>
    </alternativeName>
    <alternativeName>
        <fullName>Gastric cancer antigen Ga34</fullName>
    </alternativeName>
    <alternativeName>
        <fullName>Mucin-14</fullName>
        <shortName>MUC-14</shortName>
    </alternativeName>
</protein>
<sequence length="261" mass="27452">MELLQVTILFLLPSICSSNSTGVLEAANNSLVVTTTKPSITTPNTESLQKNVVTPTTGTTPKGTITNELLKMSLMSTATFLTSKDEGLKATTTDVRKNDSIISNVTVTSVTLPNAVSTLQSSKPKTETQSSIKTTEIPGSVLQPDASPSKTGTLTSIPVTIPENTSQSQVIGTEGGKNASTSATSRSYSSIILPVVIALIVITLSVFVLVGLYRMCWKADPGTPENGNDQPQSDKESVKLLTVKTISHESGEHSAQGKTKN</sequence>